<proteinExistence type="evidence at transcript level"/>
<gene>
    <name evidence="5" type="ORF">contig00124</name>
</gene>
<sequence length="78" mass="8848">MKEANTRRYIHLCLVVVLVSTIITTEAEDDRLFCIRHHKYCGHRPNRCCSGLFCRCNTFGTNCRCQSKGALGKLISGK</sequence>
<protein>
    <recommendedName>
        <fullName evidence="2 6">Xibalbin-13 1</fullName>
        <shortName evidence="2 6">Xib13 1</shortName>
    </recommendedName>
    <alternativeName>
        <fullName evidence="6">Kappa-speleotoxin(13)-Xt1a</fullName>
        <shortName evidence="6">Kappa-SLTX(13)-Xt1a</shortName>
    </alternativeName>
    <alternativeName>
        <fullName evidence="5">Putative neurotoxin</fullName>
    </alternativeName>
</protein>
<comment type="function">
    <text evidence="2 7">Probable neurotoxin (Probable). Strongly inhibits voltage-gated potassium channels (Kv1.1/KCNA1, Kv1.2/KCNA2, Kv1.3/KCNA3, and Kv1.6/KCNA6) and mildly inhibits sodium channels (Nav1.2/SCN2A, Nav1.4/SCN4A, Nav1.5/SCN5A, Nav1.6/SCN8A, and BgNav). Induces activation of protein kinase A type II (PKA-II) and MAP kinase Erk1/2 in primary nociceptive and non-nociceptive sensory neurons. Does not show cytotoxic activity. Does not have an impact on Ca2+, cAMP, and NO signaling in the cell types analyzed. Does not interfere with the adhesion of leukocytes to endothelial cells (By similarity).</text>
</comment>
<comment type="subcellular location">
    <subcellularLocation>
        <location evidence="7">Secreted</location>
    </subcellularLocation>
</comment>
<comment type="tissue specificity">
    <text evidence="4">Expressed by the venom gland.</text>
</comment>
<comment type="domain">
    <text evidence="6">The presence of a 'disulfide through disulfide knot' structurally defines this protein as a knottin.</text>
</comment>
<comment type="miscellaneous">
    <text evidence="4">The transcriptomic profile of the venom glands of S.tulumensis shows that the injected cocktail of toxins is dominated by enzymes (mostly proteases S1 and chitiniases) and that it includes this probable paralytic neurotoxin.</text>
</comment>
<comment type="similarity">
    <text evidence="6">Belongs to the xibalbin-13 family.</text>
</comment>
<comment type="online information" name="National Center for Biotechnology Information (NCBI)">
    <link uri="https://www.ncbi.nlm.nih.gov/sra/SRX282054"/>
</comment>
<evidence type="ECO:0000250" key="1">
    <source>
        <dbReference type="UniProtKB" id="B3EWH0"/>
    </source>
</evidence>
<evidence type="ECO:0000250" key="2">
    <source>
        <dbReference type="UniProtKB" id="P0DRI9"/>
    </source>
</evidence>
<evidence type="ECO:0000255" key="3"/>
<evidence type="ECO:0000269" key="4">
    <source>
    </source>
</evidence>
<evidence type="ECO:0000303" key="5">
    <source>
    </source>
</evidence>
<evidence type="ECO:0000305" key="6"/>
<evidence type="ECO:0000305" key="7">
    <source>
    </source>
</evidence>
<feature type="signal peptide" evidence="3">
    <location>
        <begin position="1"/>
        <end position="27"/>
    </location>
</feature>
<feature type="propeptide" id="PRO_0000454100" evidence="7">
    <location>
        <begin position="28"/>
        <end position="31"/>
    </location>
</feature>
<feature type="chain" id="PRO_0000454101" description="Xibalbin-13 1" evidence="7">
    <location>
        <begin position="32"/>
        <end position="76"/>
    </location>
</feature>
<feature type="modified residue" description="Serine amide" evidence="6">
    <location>
        <position position="76"/>
    </location>
</feature>
<feature type="disulfide bond" evidence="1">
    <location>
        <begin position="34"/>
        <end position="49"/>
    </location>
</feature>
<feature type="disulfide bond" evidence="1">
    <location>
        <begin position="41"/>
        <end position="54"/>
    </location>
</feature>
<feature type="disulfide bond" evidence="1">
    <location>
        <begin position="48"/>
        <end position="65"/>
    </location>
</feature>
<feature type="disulfide bond" evidence="1">
    <location>
        <begin position="56"/>
        <end position="63"/>
    </location>
</feature>
<dbReference type="SMR" id="P0DQR5"/>
<dbReference type="GO" id="GO:0005576">
    <property type="term" value="C:extracellular region"/>
    <property type="evidence" value="ECO:0007669"/>
    <property type="project" value="UniProtKB-SubCell"/>
</dbReference>
<dbReference type="GO" id="GO:0008200">
    <property type="term" value="F:ion channel inhibitor activity"/>
    <property type="evidence" value="ECO:0007669"/>
    <property type="project" value="InterPro"/>
</dbReference>
<dbReference type="GO" id="GO:0090729">
    <property type="term" value="F:toxin activity"/>
    <property type="evidence" value="ECO:0007669"/>
    <property type="project" value="UniProtKB-KW"/>
</dbReference>
<dbReference type="CDD" id="cd12960">
    <property type="entry name" value="Spider_toxin"/>
    <property type="match status" value="1"/>
</dbReference>
<dbReference type="Gene3D" id="4.10.40.10">
    <property type="match status" value="1"/>
</dbReference>
<dbReference type="InterPro" id="IPR004169">
    <property type="entry name" value="Spidertoxin"/>
</dbReference>
<dbReference type="Pfam" id="PF02819">
    <property type="entry name" value="Toxin_9"/>
    <property type="match status" value="1"/>
</dbReference>
<dbReference type="SUPFAM" id="SSF57059">
    <property type="entry name" value="omega toxin-like"/>
    <property type="match status" value="1"/>
</dbReference>
<name>XIBD1_XIBTU</name>
<reference key="1">
    <citation type="journal article" date="2014" name="Mol. Biol. Evol.">
        <title>The first venomous crustacean revealed by transcriptomics and functional morphology: remipede venom glands express a unique toxin cocktail dominated by enzymes and a neurotoxin.</title>
        <authorList>
            <person name="von Reumont B.M."/>
            <person name="Blanke A."/>
            <person name="Richter S."/>
            <person name="Alvarez F."/>
            <person name="Bleidorn C."/>
            <person name="Jenner R.A."/>
        </authorList>
    </citation>
    <scope>NUCLEOTIDE SEQUENCE [MRNA]</scope>
    <scope>TISSUE SPECIFICITY</scope>
    <source>
        <tissue>Venom gland</tissue>
    </source>
</reference>
<organism>
    <name type="scientific">Xibalbanus tulumensis</name>
    <name type="common">Blind cave remipede</name>
    <name type="synonym">Speleonectes tulumensis</name>
    <dbReference type="NCBI Taxonomy" id="1519145"/>
    <lineage>
        <taxon>Eukaryota</taxon>
        <taxon>Metazoa</taxon>
        <taxon>Ecdysozoa</taxon>
        <taxon>Arthropoda</taxon>
        <taxon>Crustacea</taxon>
        <taxon>Remipedia</taxon>
        <taxon>Nectiopoda</taxon>
        <taxon>Speleonectidae</taxon>
        <taxon>Xibalbanus</taxon>
    </lineage>
</organism>
<keyword id="KW-0027">Amidation</keyword>
<keyword id="KW-1015">Disulfide bond</keyword>
<keyword id="KW-0872">Ion channel impairing toxin</keyword>
<keyword id="KW-0960">Knottin</keyword>
<keyword id="KW-0528">Neurotoxin</keyword>
<keyword id="KW-0632">Potassium channel impairing toxin</keyword>
<keyword id="KW-0964">Secreted</keyword>
<keyword id="KW-0732">Signal</keyword>
<keyword id="KW-0800">Toxin</keyword>
<keyword id="KW-1220">Voltage-gated potassium channel impairing toxin</keyword>
<keyword id="KW-0738">Voltage-gated sodium channel impairing toxin</keyword>
<accession>P0DQR5</accession>